<reference key="1">
    <citation type="journal article" date="2004" name="Nat. Genet.">
        <title>Evidence in the Legionella pneumophila genome for exploitation of host cell functions and high genome plasticity.</title>
        <authorList>
            <person name="Cazalet C."/>
            <person name="Rusniok C."/>
            <person name="Brueggemann H."/>
            <person name="Zidane N."/>
            <person name="Magnier A."/>
            <person name="Ma L."/>
            <person name="Tichit M."/>
            <person name="Jarraud S."/>
            <person name="Bouchier C."/>
            <person name="Vandenesch F."/>
            <person name="Kunst F."/>
            <person name="Etienne J."/>
            <person name="Glaser P."/>
            <person name="Buchrieser C."/>
        </authorList>
    </citation>
    <scope>NUCLEOTIDE SEQUENCE [LARGE SCALE GENOMIC DNA]</scope>
    <source>
        <strain>Lens</strain>
    </source>
</reference>
<sequence length="396" mass="43193">MAKEKFERKKPHVNVGTIGHVDHGKTTLTAAITTIMAKKYGGTAKAYDQIDAAPEERERGITISTAHVEYESASRHYAHVDCPGHADYVKNMITGAAQMDGAILVVSAADGPMPQTREHILLSRQVGVPYIVVFMNKADMVDDPELLELVEMEVRDLLSSYDFPGDDIPIIVGSALKALEGEDSDIGVKAIEKLVETMDSYIPEPVRNIDKPFLLPIEDVFSISGRGTVVTGRVESGIVKVGEEVEIVGIRDTQKTTCTGVEMFRKLLDEGRAGDNVGVLLRGTKRDEVERGQVLAKPGTIKPHTKFEAEVYVLSKEEGGRHTPFFNGYRPQFYFRTTDVTGTCDLPSGVEMVMPGDNVQLVVSLHAPIAMDEGLRFAIREGGRTVGAGVVAKIIE</sequence>
<protein>
    <recommendedName>
        <fullName evidence="2">Elongation factor Tu</fullName>
        <shortName evidence="2">EF-Tu</shortName>
        <ecNumber evidence="2">3.6.5.3</ecNumber>
    </recommendedName>
</protein>
<dbReference type="EC" id="3.6.5.3" evidence="2"/>
<dbReference type="EMBL" id="CR628337">
    <property type="protein sequence ID" value="CAH14586.1"/>
    <property type="molecule type" value="Genomic_DNA"/>
</dbReference>
<dbReference type="EMBL" id="CR628337">
    <property type="protein sequence ID" value="CAH14598.1"/>
    <property type="molecule type" value="Genomic_DNA"/>
</dbReference>
<dbReference type="RefSeq" id="WP_011214618.1">
    <property type="nucleotide sequence ID" value="NC_006369.1"/>
</dbReference>
<dbReference type="SMR" id="Q5WZL4"/>
<dbReference type="KEGG" id="lpf:lpl0355"/>
<dbReference type="KEGG" id="lpf:lpl0367"/>
<dbReference type="LegioList" id="lpl0355"/>
<dbReference type="LegioList" id="lpl0367"/>
<dbReference type="HOGENOM" id="CLU_007265_0_2_6"/>
<dbReference type="Proteomes" id="UP000002517">
    <property type="component" value="Chromosome"/>
</dbReference>
<dbReference type="GO" id="GO:0005829">
    <property type="term" value="C:cytosol"/>
    <property type="evidence" value="ECO:0007669"/>
    <property type="project" value="TreeGrafter"/>
</dbReference>
<dbReference type="GO" id="GO:0005525">
    <property type="term" value="F:GTP binding"/>
    <property type="evidence" value="ECO:0007669"/>
    <property type="project" value="UniProtKB-UniRule"/>
</dbReference>
<dbReference type="GO" id="GO:0003924">
    <property type="term" value="F:GTPase activity"/>
    <property type="evidence" value="ECO:0007669"/>
    <property type="project" value="InterPro"/>
</dbReference>
<dbReference type="GO" id="GO:0097216">
    <property type="term" value="F:guanosine tetraphosphate binding"/>
    <property type="evidence" value="ECO:0007669"/>
    <property type="project" value="UniProtKB-ARBA"/>
</dbReference>
<dbReference type="GO" id="GO:0003746">
    <property type="term" value="F:translation elongation factor activity"/>
    <property type="evidence" value="ECO:0007669"/>
    <property type="project" value="UniProtKB-UniRule"/>
</dbReference>
<dbReference type="CDD" id="cd01884">
    <property type="entry name" value="EF_Tu"/>
    <property type="match status" value="1"/>
</dbReference>
<dbReference type="CDD" id="cd03697">
    <property type="entry name" value="EFTU_II"/>
    <property type="match status" value="1"/>
</dbReference>
<dbReference type="CDD" id="cd03707">
    <property type="entry name" value="EFTU_III"/>
    <property type="match status" value="1"/>
</dbReference>
<dbReference type="FunFam" id="2.40.30.10:FF:000001">
    <property type="entry name" value="Elongation factor Tu"/>
    <property type="match status" value="1"/>
</dbReference>
<dbReference type="FunFam" id="3.40.50.300:FF:000003">
    <property type="entry name" value="Elongation factor Tu"/>
    <property type="match status" value="1"/>
</dbReference>
<dbReference type="Gene3D" id="3.40.50.300">
    <property type="entry name" value="P-loop containing nucleotide triphosphate hydrolases"/>
    <property type="match status" value="1"/>
</dbReference>
<dbReference type="Gene3D" id="2.40.30.10">
    <property type="entry name" value="Translation factors"/>
    <property type="match status" value="2"/>
</dbReference>
<dbReference type="HAMAP" id="MF_00118_B">
    <property type="entry name" value="EF_Tu_B"/>
    <property type="match status" value="1"/>
</dbReference>
<dbReference type="InterPro" id="IPR041709">
    <property type="entry name" value="EF-Tu_GTP-bd"/>
</dbReference>
<dbReference type="InterPro" id="IPR050055">
    <property type="entry name" value="EF-Tu_GTPase"/>
</dbReference>
<dbReference type="InterPro" id="IPR004161">
    <property type="entry name" value="EFTu-like_2"/>
</dbReference>
<dbReference type="InterPro" id="IPR033720">
    <property type="entry name" value="EFTU_2"/>
</dbReference>
<dbReference type="InterPro" id="IPR031157">
    <property type="entry name" value="G_TR_CS"/>
</dbReference>
<dbReference type="InterPro" id="IPR027417">
    <property type="entry name" value="P-loop_NTPase"/>
</dbReference>
<dbReference type="InterPro" id="IPR005225">
    <property type="entry name" value="Small_GTP-bd"/>
</dbReference>
<dbReference type="InterPro" id="IPR000795">
    <property type="entry name" value="T_Tr_GTP-bd_dom"/>
</dbReference>
<dbReference type="InterPro" id="IPR009000">
    <property type="entry name" value="Transl_B-barrel_sf"/>
</dbReference>
<dbReference type="InterPro" id="IPR009001">
    <property type="entry name" value="Transl_elong_EF1A/Init_IF2_C"/>
</dbReference>
<dbReference type="InterPro" id="IPR004541">
    <property type="entry name" value="Transl_elong_EFTu/EF1A_bac/org"/>
</dbReference>
<dbReference type="InterPro" id="IPR004160">
    <property type="entry name" value="Transl_elong_EFTu/EF1A_C"/>
</dbReference>
<dbReference type="NCBIfam" id="TIGR00485">
    <property type="entry name" value="EF-Tu"/>
    <property type="match status" value="1"/>
</dbReference>
<dbReference type="NCBIfam" id="NF000766">
    <property type="entry name" value="PRK00049.1"/>
    <property type="match status" value="1"/>
</dbReference>
<dbReference type="NCBIfam" id="NF009372">
    <property type="entry name" value="PRK12735.1"/>
    <property type="match status" value="1"/>
</dbReference>
<dbReference type="NCBIfam" id="NF009373">
    <property type="entry name" value="PRK12736.1"/>
    <property type="match status" value="1"/>
</dbReference>
<dbReference type="NCBIfam" id="TIGR00231">
    <property type="entry name" value="small_GTP"/>
    <property type="match status" value="1"/>
</dbReference>
<dbReference type="PANTHER" id="PTHR43721:SF22">
    <property type="entry name" value="ELONGATION FACTOR TU, MITOCHONDRIAL"/>
    <property type="match status" value="1"/>
</dbReference>
<dbReference type="PANTHER" id="PTHR43721">
    <property type="entry name" value="ELONGATION FACTOR TU-RELATED"/>
    <property type="match status" value="1"/>
</dbReference>
<dbReference type="Pfam" id="PF00009">
    <property type="entry name" value="GTP_EFTU"/>
    <property type="match status" value="1"/>
</dbReference>
<dbReference type="Pfam" id="PF03144">
    <property type="entry name" value="GTP_EFTU_D2"/>
    <property type="match status" value="1"/>
</dbReference>
<dbReference type="Pfam" id="PF03143">
    <property type="entry name" value="GTP_EFTU_D3"/>
    <property type="match status" value="1"/>
</dbReference>
<dbReference type="PRINTS" id="PR00315">
    <property type="entry name" value="ELONGATNFCT"/>
</dbReference>
<dbReference type="SUPFAM" id="SSF50465">
    <property type="entry name" value="EF-Tu/eEF-1alpha/eIF2-gamma C-terminal domain"/>
    <property type="match status" value="1"/>
</dbReference>
<dbReference type="SUPFAM" id="SSF52540">
    <property type="entry name" value="P-loop containing nucleoside triphosphate hydrolases"/>
    <property type="match status" value="1"/>
</dbReference>
<dbReference type="SUPFAM" id="SSF50447">
    <property type="entry name" value="Translation proteins"/>
    <property type="match status" value="1"/>
</dbReference>
<dbReference type="PROSITE" id="PS00301">
    <property type="entry name" value="G_TR_1"/>
    <property type="match status" value="1"/>
</dbReference>
<dbReference type="PROSITE" id="PS51722">
    <property type="entry name" value="G_TR_2"/>
    <property type="match status" value="1"/>
</dbReference>
<accession>Q5WZL4</accession>
<proteinExistence type="inferred from homology"/>
<feature type="chain" id="PRO_0000337422" description="Elongation factor Tu">
    <location>
        <begin position="1"/>
        <end position="396"/>
    </location>
</feature>
<feature type="domain" description="tr-type G">
    <location>
        <begin position="10"/>
        <end position="206"/>
    </location>
</feature>
<feature type="region of interest" description="G1" evidence="1">
    <location>
        <begin position="19"/>
        <end position="26"/>
    </location>
</feature>
<feature type="region of interest" description="G2" evidence="1">
    <location>
        <begin position="60"/>
        <end position="64"/>
    </location>
</feature>
<feature type="region of interest" description="G3" evidence="1">
    <location>
        <begin position="81"/>
        <end position="84"/>
    </location>
</feature>
<feature type="region of interest" description="G4" evidence="1">
    <location>
        <begin position="136"/>
        <end position="139"/>
    </location>
</feature>
<feature type="region of interest" description="G5" evidence="1">
    <location>
        <begin position="174"/>
        <end position="176"/>
    </location>
</feature>
<feature type="binding site" evidence="2">
    <location>
        <begin position="19"/>
        <end position="26"/>
    </location>
    <ligand>
        <name>GTP</name>
        <dbReference type="ChEBI" id="CHEBI:37565"/>
    </ligand>
</feature>
<feature type="binding site" evidence="2">
    <location>
        <position position="26"/>
    </location>
    <ligand>
        <name>Mg(2+)</name>
        <dbReference type="ChEBI" id="CHEBI:18420"/>
    </ligand>
</feature>
<feature type="binding site" evidence="2">
    <location>
        <begin position="81"/>
        <end position="85"/>
    </location>
    <ligand>
        <name>GTP</name>
        <dbReference type="ChEBI" id="CHEBI:37565"/>
    </ligand>
</feature>
<feature type="binding site" evidence="2">
    <location>
        <begin position="136"/>
        <end position="139"/>
    </location>
    <ligand>
        <name>GTP</name>
        <dbReference type="ChEBI" id="CHEBI:37565"/>
    </ligand>
</feature>
<gene>
    <name evidence="2" type="primary">tuf1</name>
    <name type="ordered locus">lpl0355</name>
</gene>
<gene>
    <name evidence="2" type="primary">tuf2</name>
    <name type="ordered locus">lpl0367</name>
</gene>
<keyword id="KW-0963">Cytoplasm</keyword>
<keyword id="KW-0251">Elongation factor</keyword>
<keyword id="KW-0342">GTP-binding</keyword>
<keyword id="KW-0378">Hydrolase</keyword>
<keyword id="KW-0460">Magnesium</keyword>
<keyword id="KW-0479">Metal-binding</keyword>
<keyword id="KW-0547">Nucleotide-binding</keyword>
<keyword id="KW-0648">Protein biosynthesis</keyword>
<evidence type="ECO:0000250" key="1"/>
<evidence type="ECO:0000255" key="2">
    <source>
        <dbReference type="HAMAP-Rule" id="MF_00118"/>
    </source>
</evidence>
<comment type="function">
    <text evidence="2">GTP hydrolase that promotes the GTP-dependent binding of aminoacyl-tRNA to the A-site of ribosomes during protein biosynthesis.</text>
</comment>
<comment type="catalytic activity">
    <reaction evidence="2">
        <text>GTP + H2O = GDP + phosphate + H(+)</text>
        <dbReference type="Rhea" id="RHEA:19669"/>
        <dbReference type="ChEBI" id="CHEBI:15377"/>
        <dbReference type="ChEBI" id="CHEBI:15378"/>
        <dbReference type="ChEBI" id="CHEBI:37565"/>
        <dbReference type="ChEBI" id="CHEBI:43474"/>
        <dbReference type="ChEBI" id="CHEBI:58189"/>
        <dbReference type="EC" id="3.6.5.3"/>
    </reaction>
    <physiologicalReaction direction="left-to-right" evidence="2">
        <dbReference type="Rhea" id="RHEA:19670"/>
    </physiologicalReaction>
</comment>
<comment type="subunit">
    <text evidence="2">Monomer.</text>
</comment>
<comment type="subcellular location">
    <subcellularLocation>
        <location evidence="2">Cytoplasm</location>
    </subcellularLocation>
</comment>
<comment type="similarity">
    <text evidence="2">Belongs to the TRAFAC class translation factor GTPase superfamily. Classic translation factor GTPase family. EF-Tu/EF-1A subfamily.</text>
</comment>
<organism>
    <name type="scientific">Legionella pneumophila (strain Lens)</name>
    <dbReference type="NCBI Taxonomy" id="297245"/>
    <lineage>
        <taxon>Bacteria</taxon>
        <taxon>Pseudomonadati</taxon>
        <taxon>Pseudomonadota</taxon>
        <taxon>Gammaproteobacteria</taxon>
        <taxon>Legionellales</taxon>
        <taxon>Legionellaceae</taxon>
        <taxon>Legionella</taxon>
    </lineage>
</organism>
<name>EFTU_LEGPL</name>